<gene>
    <name evidence="1" type="primary">msrB</name>
    <name type="ordered locus">ECS88_1831</name>
</gene>
<evidence type="ECO:0000255" key="1">
    <source>
        <dbReference type="HAMAP-Rule" id="MF_01400"/>
    </source>
</evidence>
<evidence type="ECO:0000255" key="2">
    <source>
        <dbReference type="PROSITE-ProRule" id="PRU01126"/>
    </source>
</evidence>
<organism>
    <name type="scientific">Escherichia coli O45:K1 (strain S88 / ExPEC)</name>
    <dbReference type="NCBI Taxonomy" id="585035"/>
    <lineage>
        <taxon>Bacteria</taxon>
        <taxon>Pseudomonadati</taxon>
        <taxon>Pseudomonadota</taxon>
        <taxon>Gammaproteobacteria</taxon>
        <taxon>Enterobacterales</taxon>
        <taxon>Enterobacteriaceae</taxon>
        <taxon>Escherichia</taxon>
    </lineage>
</organism>
<comment type="catalytic activity">
    <reaction evidence="1">
        <text>L-methionyl-[protein] + [thioredoxin]-disulfide + H2O = L-methionyl-(R)-S-oxide-[protein] + [thioredoxin]-dithiol</text>
        <dbReference type="Rhea" id="RHEA:24164"/>
        <dbReference type="Rhea" id="RHEA-COMP:10698"/>
        <dbReference type="Rhea" id="RHEA-COMP:10700"/>
        <dbReference type="Rhea" id="RHEA-COMP:12313"/>
        <dbReference type="Rhea" id="RHEA-COMP:12314"/>
        <dbReference type="ChEBI" id="CHEBI:15377"/>
        <dbReference type="ChEBI" id="CHEBI:16044"/>
        <dbReference type="ChEBI" id="CHEBI:29950"/>
        <dbReference type="ChEBI" id="CHEBI:45764"/>
        <dbReference type="ChEBI" id="CHEBI:50058"/>
        <dbReference type="EC" id="1.8.4.12"/>
    </reaction>
</comment>
<comment type="cofactor">
    <cofactor evidence="1">
        <name>Zn(2+)</name>
        <dbReference type="ChEBI" id="CHEBI:29105"/>
    </cofactor>
    <text evidence="1">Binds 1 zinc ion per subunit. The zinc ion is important for the structural integrity of the protein.</text>
</comment>
<comment type="similarity">
    <text evidence="1">Belongs to the MsrB Met sulfoxide reductase family.</text>
</comment>
<dbReference type="EC" id="1.8.4.12" evidence="1"/>
<dbReference type="EMBL" id="CU928161">
    <property type="protein sequence ID" value="CAR03138.1"/>
    <property type="molecule type" value="Genomic_DNA"/>
</dbReference>
<dbReference type="RefSeq" id="WP_001284614.1">
    <property type="nucleotide sequence ID" value="NC_011742.1"/>
</dbReference>
<dbReference type="SMR" id="B7MAY9"/>
<dbReference type="KEGG" id="ecz:ECS88_1831"/>
<dbReference type="HOGENOM" id="CLU_031040_8_5_6"/>
<dbReference type="Proteomes" id="UP000000747">
    <property type="component" value="Chromosome"/>
</dbReference>
<dbReference type="GO" id="GO:0005737">
    <property type="term" value="C:cytoplasm"/>
    <property type="evidence" value="ECO:0007669"/>
    <property type="project" value="TreeGrafter"/>
</dbReference>
<dbReference type="GO" id="GO:0033743">
    <property type="term" value="F:peptide-methionine (R)-S-oxide reductase activity"/>
    <property type="evidence" value="ECO:0007669"/>
    <property type="project" value="UniProtKB-UniRule"/>
</dbReference>
<dbReference type="GO" id="GO:0008270">
    <property type="term" value="F:zinc ion binding"/>
    <property type="evidence" value="ECO:0007669"/>
    <property type="project" value="UniProtKB-UniRule"/>
</dbReference>
<dbReference type="GO" id="GO:0030091">
    <property type="term" value="P:protein repair"/>
    <property type="evidence" value="ECO:0007669"/>
    <property type="project" value="InterPro"/>
</dbReference>
<dbReference type="GO" id="GO:0006979">
    <property type="term" value="P:response to oxidative stress"/>
    <property type="evidence" value="ECO:0007669"/>
    <property type="project" value="InterPro"/>
</dbReference>
<dbReference type="FunFam" id="2.170.150.20:FF:000001">
    <property type="entry name" value="Peptide methionine sulfoxide reductase MsrB"/>
    <property type="match status" value="1"/>
</dbReference>
<dbReference type="Gene3D" id="2.170.150.20">
    <property type="entry name" value="Peptide methionine sulfoxide reductase"/>
    <property type="match status" value="1"/>
</dbReference>
<dbReference type="HAMAP" id="MF_01400">
    <property type="entry name" value="MsrB"/>
    <property type="match status" value="1"/>
</dbReference>
<dbReference type="InterPro" id="IPR028427">
    <property type="entry name" value="Met_Sox_Rdtase_MsrB"/>
</dbReference>
<dbReference type="InterPro" id="IPR002579">
    <property type="entry name" value="Met_Sox_Rdtase_MsrB_dom"/>
</dbReference>
<dbReference type="InterPro" id="IPR011057">
    <property type="entry name" value="Mss4-like_sf"/>
</dbReference>
<dbReference type="NCBIfam" id="TIGR00357">
    <property type="entry name" value="peptide-methionine (R)-S-oxide reductase MsrB"/>
    <property type="match status" value="1"/>
</dbReference>
<dbReference type="PANTHER" id="PTHR10173">
    <property type="entry name" value="METHIONINE SULFOXIDE REDUCTASE"/>
    <property type="match status" value="1"/>
</dbReference>
<dbReference type="PANTHER" id="PTHR10173:SF52">
    <property type="entry name" value="METHIONINE-R-SULFOXIDE REDUCTASE B1"/>
    <property type="match status" value="1"/>
</dbReference>
<dbReference type="Pfam" id="PF01641">
    <property type="entry name" value="SelR"/>
    <property type="match status" value="1"/>
</dbReference>
<dbReference type="SUPFAM" id="SSF51316">
    <property type="entry name" value="Mss4-like"/>
    <property type="match status" value="1"/>
</dbReference>
<dbReference type="PROSITE" id="PS51790">
    <property type="entry name" value="MSRB"/>
    <property type="match status" value="1"/>
</dbReference>
<feature type="chain" id="PRO_1000145364" description="Peptide methionine sulfoxide reductase MsrB">
    <location>
        <begin position="1"/>
        <end position="137"/>
    </location>
</feature>
<feature type="domain" description="MsrB" evidence="2">
    <location>
        <begin position="7"/>
        <end position="129"/>
    </location>
</feature>
<feature type="active site" description="Nucleophile" evidence="2">
    <location>
        <position position="118"/>
    </location>
</feature>
<feature type="binding site" evidence="2">
    <location>
        <position position="46"/>
    </location>
    <ligand>
        <name>Zn(2+)</name>
        <dbReference type="ChEBI" id="CHEBI:29105"/>
    </ligand>
</feature>
<feature type="binding site" evidence="2">
    <location>
        <position position="49"/>
    </location>
    <ligand>
        <name>Zn(2+)</name>
        <dbReference type="ChEBI" id="CHEBI:29105"/>
    </ligand>
</feature>
<feature type="binding site" evidence="2">
    <location>
        <position position="95"/>
    </location>
    <ligand>
        <name>Zn(2+)</name>
        <dbReference type="ChEBI" id="CHEBI:29105"/>
    </ligand>
</feature>
<feature type="binding site" evidence="2">
    <location>
        <position position="98"/>
    </location>
    <ligand>
        <name>Zn(2+)</name>
        <dbReference type="ChEBI" id="CHEBI:29105"/>
    </ligand>
</feature>
<proteinExistence type="inferred from homology"/>
<reference key="1">
    <citation type="journal article" date="2009" name="PLoS Genet.">
        <title>Organised genome dynamics in the Escherichia coli species results in highly diverse adaptive paths.</title>
        <authorList>
            <person name="Touchon M."/>
            <person name="Hoede C."/>
            <person name="Tenaillon O."/>
            <person name="Barbe V."/>
            <person name="Baeriswyl S."/>
            <person name="Bidet P."/>
            <person name="Bingen E."/>
            <person name="Bonacorsi S."/>
            <person name="Bouchier C."/>
            <person name="Bouvet O."/>
            <person name="Calteau A."/>
            <person name="Chiapello H."/>
            <person name="Clermont O."/>
            <person name="Cruveiller S."/>
            <person name="Danchin A."/>
            <person name="Diard M."/>
            <person name="Dossat C."/>
            <person name="Karoui M.E."/>
            <person name="Frapy E."/>
            <person name="Garry L."/>
            <person name="Ghigo J.M."/>
            <person name="Gilles A.M."/>
            <person name="Johnson J."/>
            <person name="Le Bouguenec C."/>
            <person name="Lescat M."/>
            <person name="Mangenot S."/>
            <person name="Martinez-Jehanne V."/>
            <person name="Matic I."/>
            <person name="Nassif X."/>
            <person name="Oztas S."/>
            <person name="Petit M.A."/>
            <person name="Pichon C."/>
            <person name="Rouy Z."/>
            <person name="Ruf C.S."/>
            <person name="Schneider D."/>
            <person name="Tourret J."/>
            <person name="Vacherie B."/>
            <person name="Vallenet D."/>
            <person name="Medigue C."/>
            <person name="Rocha E.P.C."/>
            <person name="Denamur E."/>
        </authorList>
    </citation>
    <scope>NUCLEOTIDE SEQUENCE [LARGE SCALE GENOMIC DNA]</scope>
    <source>
        <strain>S88 / ExPEC</strain>
    </source>
</reference>
<name>MSRB_ECO45</name>
<sequence length="137" mass="15465">MANKPSAEELKKNLSEMQFYVTQNHGTEPPFTGRLLHNKRDGVYHCLICDAPLFHSQTKYDSGCGWPSFYEPLSEESIRYIKDLSHGMQRIEIRCGNCDAHLGHVFPDGPQPTGERYCVNSASLRFTDGENGEEING</sequence>
<accession>B7MAY9</accession>
<protein>
    <recommendedName>
        <fullName evidence="1">Peptide methionine sulfoxide reductase MsrB</fullName>
        <ecNumber evidence="1">1.8.4.12</ecNumber>
    </recommendedName>
    <alternativeName>
        <fullName evidence="1">Peptide-methionine (R)-S-oxide reductase</fullName>
    </alternativeName>
</protein>
<keyword id="KW-0479">Metal-binding</keyword>
<keyword id="KW-0560">Oxidoreductase</keyword>
<keyword id="KW-1185">Reference proteome</keyword>
<keyword id="KW-0862">Zinc</keyword>